<organism>
    <name type="scientific">Prochlorococcus marinus (strain MIT 9313)</name>
    <dbReference type="NCBI Taxonomy" id="74547"/>
    <lineage>
        <taxon>Bacteria</taxon>
        <taxon>Bacillati</taxon>
        <taxon>Cyanobacteriota</taxon>
        <taxon>Cyanophyceae</taxon>
        <taxon>Synechococcales</taxon>
        <taxon>Prochlorococcaceae</taxon>
        <taxon>Prochlorococcus</taxon>
    </lineage>
</organism>
<accession>Q7V6I0</accession>
<protein>
    <recommendedName>
        <fullName evidence="1">Photosystem II D2 protein</fullName>
        <shortName evidence="1">PSII D2 protein</shortName>
        <ecNumber evidence="1">1.10.3.9</ecNumber>
    </recommendedName>
    <alternativeName>
        <fullName evidence="1">Photosystem Q(A) protein</fullName>
    </alternativeName>
</protein>
<evidence type="ECO:0000255" key="1">
    <source>
        <dbReference type="HAMAP-Rule" id="MF_01383"/>
    </source>
</evidence>
<evidence type="ECO:0000305" key="2"/>
<feature type="chain" id="PRO_1000145084" description="Photosystem II D2 protein">
    <location>
        <begin position="1"/>
        <end position="351"/>
    </location>
</feature>
<feature type="transmembrane region" description="Helical" evidence="1">
    <location>
        <begin position="39"/>
        <end position="59"/>
    </location>
</feature>
<feature type="transmembrane region" description="Helical" evidence="1">
    <location>
        <begin position="123"/>
        <end position="139"/>
    </location>
</feature>
<feature type="transmembrane region" description="Helical" evidence="1">
    <location>
        <begin position="151"/>
        <end position="164"/>
    </location>
</feature>
<feature type="transmembrane region" description="Helical" evidence="1">
    <location>
        <begin position="206"/>
        <end position="226"/>
    </location>
</feature>
<feature type="transmembrane region" description="Helical" evidence="1">
    <location>
        <begin position="277"/>
        <end position="293"/>
    </location>
</feature>
<feature type="binding site" description="axial binding residue" evidence="1">
    <location>
        <position position="116"/>
    </location>
    <ligand>
        <name>chlorophyll a</name>
        <dbReference type="ChEBI" id="CHEBI:58416"/>
        <label>ChlzD2</label>
    </ligand>
    <ligandPart>
        <name>Mg</name>
        <dbReference type="ChEBI" id="CHEBI:25107"/>
    </ligandPart>
</feature>
<feature type="binding site" evidence="1">
    <location>
        <position position="128"/>
    </location>
    <ligand>
        <name>pheophytin a</name>
        <dbReference type="ChEBI" id="CHEBI:136840"/>
        <label>D2</label>
    </ligand>
</feature>
<feature type="binding site" evidence="1">
    <location>
        <position position="141"/>
    </location>
    <ligand>
        <name>pheophytin a</name>
        <dbReference type="ChEBI" id="CHEBI:136840"/>
        <label>D2</label>
    </ligand>
</feature>
<feature type="binding site" description="axial binding residue" evidence="1">
    <location>
        <position position="196"/>
    </location>
    <ligand>
        <name>chlorophyll a</name>
        <dbReference type="ChEBI" id="CHEBI:58416"/>
        <label>PD2</label>
    </ligand>
    <ligandPart>
        <name>Mg</name>
        <dbReference type="ChEBI" id="CHEBI:25107"/>
    </ligandPart>
</feature>
<feature type="binding site" evidence="1">
    <location>
        <position position="213"/>
    </location>
    <ligand>
        <name>a plastoquinone</name>
        <dbReference type="ChEBI" id="CHEBI:17757"/>
        <label>Q(A)</label>
    </ligand>
</feature>
<feature type="binding site" evidence="1">
    <location>
        <position position="213"/>
    </location>
    <ligand>
        <name>Fe cation</name>
        <dbReference type="ChEBI" id="CHEBI:24875"/>
        <note>ligand shared with heterodimeric partner</note>
    </ligand>
</feature>
<feature type="binding site" evidence="1">
    <location>
        <position position="260"/>
    </location>
    <ligand>
        <name>a plastoquinone</name>
        <dbReference type="ChEBI" id="CHEBI:17757"/>
        <label>Q(A)</label>
    </ligand>
</feature>
<feature type="binding site" evidence="1">
    <location>
        <position position="267"/>
    </location>
    <ligand>
        <name>Fe cation</name>
        <dbReference type="ChEBI" id="CHEBI:24875"/>
        <note>ligand shared with heterodimeric partner</note>
    </ligand>
</feature>
<sequence>MTIAVGRAPQRGWFDVLDDWLKRDRFVFVGWSGLLLFPTAYLALGGWFTGTTFVTSWYTHGIASSYLEGCNFLSAAVSTPADAMGHSLLLLWGPEAQGDFVRWCQLGGLWTFVALHGSFSLIGFMLRQFEIARLVGIRPYNALAFSGPVVVFLACFLIYPLGQHSWFFAPSFGVAAIFRFILFLQGFHNWTLNPFHMMGVAGILGGALLCGIHGATVQNTLFEDGAMSNTFKGFDPTQEEETYSMVTANRFWSQIFGIAFSNKRWLHFFMLFVPVMGMWTPSVGIVGLAVNLRAYDFVSQEVRAAEDPEFETFYTKNVLLNEGIRAWMSVADQPHENFVFPEEVMPRGNAL</sequence>
<dbReference type="EC" id="1.10.3.9" evidence="1"/>
<dbReference type="EMBL" id="BX548175">
    <property type="protein sequence ID" value="CAE21354.1"/>
    <property type="molecule type" value="Genomic_DNA"/>
</dbReference>
<dbReference type="RefSeq" id="WP_011130550.1">
    <property type="nucleotide sequence ID" value="NC_005071.1"/>
</dbReference>
<dbReference type="SMR" id="Q7V6I0"/>
<dbReference type="KEGG" id="pmt:PMT_1179"/>
<dbReference type="eggNOG" id="ENOG502Z8JK">
    <property type="taxonomic scope" value="Bacteria"/>
</dbReference>
<dbReference type="HOGENOM" id="CLU_077965_0_0_3"/>
<dbReference type="OrthoDB" id="505356at2"/>
<dbReference type="Proteomes" id="UP000001423">
    <property type="component" value="Chromosome"/>
</dbReference>
<dbReference type="GO" id="GO:0009523">
    <property type="term" value="C:photosystem II"/>
    <property type="evidence" value="ECO:0007669"/>
    <property type="project" value="UniProtKB-KW"/>
</dbReference>
<dbReference type="GO" id="GO:0031676">
    <property type="term" value="C:plasma membrane-derived thylakoid membrane"/>
    <property type="evidence" value="ECO:0007669"/>
    <property type="project" value="UniProtKB-SubCell"/>
</dbReference>
<dbReference type="GO" id="GO:0016168">
    <property type="term" value="F:chlorophyll binding"/>
    <property type="evidence" value="ECO:0007669"/>
    <property type="project" value="UniProtKB-UniRule"/>
</dbReference>
<dbReference type="GO" id="GO:0045156">
    <property type="term" value="F:electron transporter, transferring electrons within the cyclic electron transport pathway of photosynthesis activity"/>
    <property type="evidence" value="ECO:0007669"/>
    <property type="project" value="InterPro"/>
</dbReference>
<dbReference type="GO" id="GO:0005506">
    <property type="term" value="F:iron ion binding"/>
    <property type="evidence" value="ECO:0007669"/>
    <property type="project" value="UniProtKB-UniRule"/>
</dbReference>
<dbReference type="GO" id="GO:0010242">
    <property type="term" value="F:oxygen evolving activity"/>
    <property type="evidence" value="ECO:0007669"/>
    <property type="project" value="UniProtKB-EC"/>
</dbReference>
<dbReference type="GO" id="GO:0009772">
    <property type="term" value="P:photosynthetic electron transport in photosystem II"/>
    <property type="evidence" value="ECO:0007669"/>
    <property type="project" value="InterPro"/>
</dbReference>
<dbReference type="Gene3D" id="1.20.85.10">
    <property type="entry name" value="Photosystem II protein D1-like"/>
    <property type="match status" value="1"/>
</dbReference>
<dbReference type="HAMAP" id="MF_01383">
    <property type="entry name" value="PSII_PsbD_D2"/>
    <property type="match status" value="1"/>
</dbReference>
<dbReference type="InterPro" id="IPR055266">
    <property type="entry name" value="D1/D2"/>
</dbReference>
<dbReference type="InterPro" id="IPR036854">
    <property type="entry name" value="Photo_II_D1/D2_sf"/>
</dbReference>
<dbReference type="InterPro" id="IPR000484">
    <property type="entry name" value="Photo_RC_L/M"/>
</dbReference>
<dbReference type="InterPro" id="IPR055265">
    <property type="entry name" value="Photo_RC_L/M_CS"/>
</dbReference>
<dbReference type="InterPro" id="IPR005868">
    <property type="entry name" value="PSII_PsbD/D2"/>
</dbReference>
<dbReference type="NCBIfam" id="TIGR01152">
    <property type="entry name" value="psbD"/>
    <property type="match status" value="1"/>
</dbReference>
<dbReference type="PANTHER" id="PTHR33149:SF12">
    <property type="entry name" value="PHOTOSYSTEM II D2 PROTEIN"/>
    <property type="match status" value="1"/>
</dbReference>
<dbReference type="PANTHER" id="PTHR33149">
    <property type="entry name" value="PHOTOSYSTEM II PROTEIN D1"/>
    <property type="match status" value="1"/>
</dbReference>
<dbReference type="Pfam" id="PF00124">
    <property type="entry name" value="Photo_RC"/>
    <property type="match status" value="1"/>
</dbReference>
<dbReference type="PRINTS" id="PR00256">
    <property type="entry name" value="REACTNCENTRE"/>
</dbReference>
<dbReference type="SUPFAM" id="SSF81483">
    <property type="entry name" value="Bacterial photosystem II reaction centre, L and M subunits"/>
    <property type="match status" value="1"/>
</dbReference>
<dbReference type="PROSITE" id="PS00244">
    <property type="entry name" value="REACTION_CENTER"/>
    <property type="match status" value="1"/>
</dbReference>
<gene>
    <name evidence="1" type="primary">psbD</name>
    <name type="ordered locus">PMT_1179</name>
</gene>
<reference key="1">
    <citation type="journal article" date="2003" name="Nature">
        <title>Genome divergence in two Prochlorococcus ecotypes reflects oceanic niche differentiation.</title>
        <authorList>
            <person name="Rocap G."/>
            <person name="Larimer F.W."/>
            <person name="Lamerdin J.E."/>
            <person name="Malfatti S."/>
            <person name="Chain P."/>
            <person name="Ahlgren N.A."/>
            <person name="Arellano A."/>
            <person name="Coleman M."/>
            <person name="Hauser L."/>
            <person name="Hess W.R."/>
            <person name="Johnson Z.I."/>
            <person name="Land M.L."/>
            <person name="Lindell D."/>
            <person name="Post A.F."/>
            <person name="Regala W."/>
            <person name="Shah M."/>
            <person name="Shaw S.L."/>
            <person name="Steglich C."/>
            <person name="Sullivan M.B."/>
            <person name="Ting C.S."/>
            <person name="Tolonen A."/>
            <person name="Webb E.A."/>
            <person name="Zinser E.R."/>
            <person name="Chisholm S.W."/>
        </authorList>
    </citation>
    <scope>NUCLEOTIDE SEQUENCE [LARGE SCALE GENOMIC DNA]</scope>
    <source>
        <strain>MIT 9313</strain>
    </source>
</reference>
<name>PSBD_PROMM</name>
<comment type="function">
    <text evidence="1">Photosystem II (PSII) is a light-driven water:plastoquinone oxidoreductase that uses light energy to abstract electrons from H(2)O, generating O(2) and a proton gradient subsequently used for ATP formation. It consists of a core antenna complex that captures photons, and an electron transfer chain that converts photonic excitation into a charge separation. The D1/D2 (PsbA/PsbD) reaction center heterodimer binds P680, the primary electron donor of PSII as well as several subsequent electron acceptors. D2 is needed for assembly of a stable PSII complex.</text>
</comment>
<comment type="catalytic activity">
    <reaction evidence="1">
        <text>2 a plastoquinone + 4 hnu + 2 H2O = 2 a plastoquinol + O2</text>
        <dbReference type="Rhea" id="RHEA:36359"/>
        <dbReference type="Rhea" id="RHEA-COMP:9561"/>
        <dbReference type="Rhea" id="RHEA-COMP:9562"/>
        <dbReference type="ChEBI" id="CHEBI:15377"/>
        <dbReference type="ChEBI" id="CHEBI:15379"/>
        <dbReference type="ChEBI" id="CHEBI:17757"/>
        <dbReference type="ChEBI" id="CHEBI:30212"/>
        <dbReference type="ChEBI" id="CHEBI:62192"/>
        <dbReference type="EC" id="1.10.3.9"/>
    </reaction>
</comment>
<comment type="cofactor">
    <text evidence="1">The D1/D2 heterodimer binds P680, chlorophylls that are the primary electron donor of PSII, and subsequent electron acceptors. It shares a non-heme iron and each subunit binds pheophytin, quinone, additional chlorophylls, carotenoids and lipids. There is also a Cl(-1) ion associated with D1 and D2, which is required for oxygen evolution. The PSII complex binds additional chlorophylls, carotenoids and specific lipids.</text>
</comment>
<comment type="subunit">
    <text evidence="2">PSII is composed of 1 copy each of membrane proteins PsbA, PsbB, PsbC, PsbD, PsbE, PsbF, PsbH, PsbI, PsbJ, PsbK, PsbL, PsbM, PsbT, PsbX, PsbY, Psb30/Ycf12, peripheral proteins PsbO, CyanoQ (PsbQ), PsbU, PsbV and a large number of cofactors. It forms dimeric complexes.</text>
</comment>
<comment type="subcellular location">
    <subcellularLocation>
        <location evidence="1">Cellular thylakoid membrane</location>
        <topology evidence="1">Multi-pass membrane protein</topology>
    </subcellularLocation>
</comment>
<comment type="miscellaneous">
    <text evidence="1">2 of the reaction center chlorophylls (ChlD1 and ChlD2) are entirely coordinated by water.</text>
</comment>
<comment type="similarity">
    <text evidence="1">Belongs to the reaction center PufL/M/PsbA/D family.</text>
</comment>
<keyword id="KW-0148">Chlorophyll</keyword>
<keyword id="KW-0157">Chromophore</keyword>
<keyword id="KW-0249">Electron transport</keyword>
<keyword id="KW-0408">Iron</keyword>
<keyword id="KW-0460">Magnesium</keyword>
<keyword id="KW-0472">Membrane</keyword>
<keyword id="KW-0479">Metal-binding</keyword>
<keyword id="KW-0560">Oxidoreductase</keyword>
<keyword id="KW-0602">Photosynthesis</keyword>
<keyword id="KW-0604">Photosystem II</keyword>
<keyword id="KW-1185">Reference proteome</keyword>
<keyword id="KW-0793">Thylakoid</keyword>
<keyword id="KW-0812">Transmembrane</keyword>
<keyword id="KW-1133">Transmembrane helix</keyword>
<keyword id="KW-0813">Transport</keyword>
<proteinExistence type="inferred from homology"/>